<dbReference type="EC" id="2.7.7.6" evidence="1"/>
<dbReference type="EMBL" id="CP000948">
    <property type="protein sequence ID" value="ACB04989.1"/>
    <property type="molecule type" value="Genomic_DNA"/>
</dbReference>
<dbReference type="RefSeq" id="WP_000263098.1">
    <property type="nucleotide sequence ID" value="NC_010473.1"/>
</dbReference>
<dbReference type="EMDB" id="EMD-3580"/>
<dbReference type="SMR" id="B1XBY9"/>
<dbReference type="GeneID" id="93777907"/>
<dbReference type="KEGG" id="ecd:ECDH10B_4175"/>
<dbReference type="HOGENOM" id="CLU_000524_4_3_6"/>
<dbReference type="GO" id="GO:0000428">
    <property type="term" value="C:DNA-directed RNA polymerase complex"/>
    <property type="evidence" value="ECO:0007669"/>
    <property type="project" value="UniProtKB-KW"/>
</dbReference>
<dbReference type="GO" id="GO:0003677">
    <property type="term" value="F:DNA binding"/>
    <property type="evidence" value="ECO:0007669"/>
    <property type="project" value="UniProtKB-UniRule"/>
</dbReference>
<dbReference type="GO" id="GO:0003899">
    <property type="term" value="F:DNA-directed RNA polymerase activity"/>
    <property type="evidence" value="ECO:0007669"/>
    <property type="project" value="UniProtKB-UniRule"/>
</dbReference>
<dbReference type="GO" id="GO:0032549">
    <property type="term" value="F:ribonucleoside binding"/>
    <property type="evidence" value="ECO:0007669"/>
    <property type="project" value="InterPro"/>
</dbReference>
<dbReference type="GO" id="GO:0006351">
    <property type="term" value="P:DNA-templated transcription"/>
    <property type="evidence" value="ECO:0007669"/>
    <property type="project" value="UniProtKB-UniRule"/>
</dbReference>
<dbReference type="CDD" id="cd00653">
    <property type="entry name" value="RNA_pol_B_RPB2"/>
    <property type="match status" value="1"/>
</dbReference>
<dbReference type="FunFam" id="2.30.150.10:FF:000001">
    <property type="entry name" value="DNA-directed RNA polymerase subunit beta"/>
    <property type="match status" value="1"/>
</dbReference>
<dbReference type="FunFam" id="2.40.270.10:FF:000003">
    <property type="entry name" value="DNA-directed RNA polymerase subunit beta"/>
    <property type="match status" value="1"/>
</dbReference>
<dbReference type="FunFam" id="2.40.270.10:FF:000004">
    <property type="entry name" value="DNA-directed RNA polymerase subunit beta"/>
    <property type="match status" value="1"/>
</dbReference>
<dbReference type="FunFam" id="2.40.50.100:FF:000006">
    <property type="entry name" value="DNA-directed RNA polymerase subunit beta"/>
    <property type="match status" value="1"/>
</dbReference>
<dbReference type="FunFam" id="2.40.50.150:FF:000001">
    <property type="entry name" value="DNA-directed RNA polymerase subunit beta"/>
    <property type="match status" value="1"/>
</dbReference>
<dbReference type="FunFam" id="3.90.1100.10:FF:000002">
    <property type="entry name" value="DNA-directed RNA polymerase subunit beta"/>
    <property type="match status" value="1"/>
</dbReference>
<dbReference type="FunFam" id="3.90.1110.10:FF:000001">
    <property type="entry name" value="DNA-directed RNA polymerase subunit beta"/>
    <property type="match status" value="1"/>
</dbReference>
<dbReference type="FunFam" id="3.90.1110.10:FF:000004">
    <property type="entry name" value="DNA-directed RNA polymerase subunit beta"/>
    <property type="match status" value="1"/>
</dbReference>
<dbReference type="FunFam" id="3.90.1800.10:FF:000001">
    <property type="entry name" value="DNA-directed RNA polymerase subunit beta"/>
    <property type="match status" value="1"/>
</dbReference>
<dbReference type="Gene3D" id="2.40.50.100">
    <property type="match status" value="1"/>
</dbReference>
<dbReference type="Gene3D" id="2.40.50.150">
    <property type="match status" value="1"/>
</dbReference>
<dbReference type="Gene3D" id="3.90.1100.10">
    <property type="match status" value="2"/>
</dbReference>
<dbReference type="Gene3D" id="6.10.140.1670">
    <property type="match status" value="1"/>
</dbReference>
<dbReference type="Gene3D" id="2.30.150.10">
    <property type="entry name" value="DNA-directed RNA polymerase, beta subunit, external 1 domain"/>
    <property type="match status" value="1"/>
</dbReference>
<dbReference type="Gene3D" id="2.40.270.10">
    <property type="entry name" value="DNA-directed RNA polymerase, subunit 2, domain 6"/>
    <property type="match status" value="1"/>
</dbReference>
<dbReference type="Gene3D" id="3.90.1800.10">
    <property type="entry name" value="RNA polymerase alpha subunit dimerisation domain"/>
    <property type="match status" value="1"/>
</dbReference>
<dbReference type="Gene3D" id="3.90.1110.10">
    <property type="entry name" value="RNA polymerase Rpb2, domain 2"/>
    <property type="match status" value="1"/>
</dbReference>
<dbReference type="HAMAP" id="MF_01321">
    <property type="entry name" value="RNApol_bact_RpoB"/>
    <property type="match status" value="1"/>
</dbReference>
<dbReference type="InterPro" id="IPR042107">
    <property type="entry name" value="DNA-dir_RNA_pol_bsu_ext_1_sf"/>
</dbReference>
<dbReference type="InterPro" id="IPR019462">
    <property type="entry name" value="DNA-dir_RNA_pol_bsu_external_1"/>
</dbReference>
<dbReference type="InterPro" id="IPR015712">
    <property type="entry name" value="DNA-dir_RNA_pol_su2"/>
</dbReference>
<dbReference type="InterPro" id="IPR007120">
    <property type="entry name" value="DNA-dir_RNAP_su2_dom"/>
</dbReference>
<dbReference type="InterPro" id="IPR037033">
    <property type="entry name" value="DNA-dir_RNAP_su2_hyb_sf"/>
</dbReference>
<dbReference type="InterPro" id="IPR010243">
    <property type="entry name" value="RNA_pol_bsu_bac"/>
</dbReference>
<dbReference type="InterPro" id="IPR007121">
    <property type="entry name" value="RNA_pol_bsu_CS"/>
</dbReference>
<dbReference type="InterPro" id="IPR007644">
    <property type="entry name" value="RNA_pol_bsu_protrusion"/>
</dbReference>
<dbReference type="InterPro" id="IPR007642">
    <property type="entry name" value="RNA_pol_Rpb2_2"/>
</dbReference>
<dbReference type="InterPro" id="IPR037034">
    <property type="entry name" value="RNA_pol_Rpb2_2_sf"/>
</dbReference>
<dbReference type="InterPro" id="IPR007645">
    <property type="entry name" value="RNA_pol_Rpb2_3"/>
</dbReference>
<dbReference type="InterPro" id="IPR007641">
    <property type="entry name" value="RNA_pol_Rpb2_7"/>
</dbReference>
<dbReference type="InterPro" id="IPR014724">
    <property type="entry name" value="RNA_pol_RPB2_OB-fold"/>
</dbReference>
<dbReference type="NCBIfam" id="NF001616">
    <property type="entry name" value="PRK00405.1"/>
    <property type="match status" value="1"/>
</dbReference>
<dbReference type="NCBIfam" id="TIGR02013">
    <property type="entry name" value="rpoB"/>
    <property type="match status" value="1"/>
</dbReference>
<dbReference type="PANTHER" id="PTHR20856">
    <property type="entry name" value="DNA-DIRECTED RNA POLYMERASE I SUBUNIT 2"/>
    <property type="match status" value="1"/>
</dbReference>
<dbReference type="Pfam" id="PF04563">
    <property type="entry name" value="RNA_pol_Rpb2_1"/>
    <property type="match status" value="1"/>
</dbReference>
<dbReference type="Pfam" id="PF04561">
    <property type="entry name" value="RNA_pol_Rpb2_2"/>
    <property type="match status" value="2"/>
</dbReference>
<dbReference type="Pfam" id="PF04565">
    <property type="entry name" value="RNA_pol_Rpb2_3"/>
    <property type="match status" value="1"/>
</dbReference>
<dbReference type="Pfam" id="PF10385">
    <property type="entry name" value="RNA_pol_Rpb2_45"/>
    <property type="match status" value="1"/>
</dbReference>
<dbReference type="Pfam" id="PF00562">
    <property type="entry name" value="RNA_pol_Rpb2_6"/>
    <property type="match status" value="1"/>
</dbReference>
<dbReference type="Pfam" id="PF04560">
    <property type="entry name" value="RNA_pol_Rpb2_7"/>
    <property type="match status" value="1"/>
</dbReference>
<dbReference type="SUPFAM" id="SSF64484">
    <property type="entry name" value="beta and beta-prime subunits of DNA dependent RNA-polymerase"/>
    <property type="match status" value="1"/>
</dbReference>
<dbReference type="PROSITE" id="PS01166">
    <property type="entry name" value="RNA_POL_BETA"/>
    <property type="match status" value="1"/>
</dbReference>
<feature type="chain" id="PRO_1000141691" description="DNA-directed RNA polymerase subunit beta">
    <location>
        <begin position="1"/>
        <end position="1342"/>
    </location>
</feature>
<feature type="modified residue" description="N6-acetyllysine" evidence="1">
    <location>
        <position position="1022"/>
    </location>
</feature>
<feature type="modified residue" description="N6-acetyllysine" evidence="1">
    <location>
        <position position="1200"/>
    </location>
</feature>
<name>RPOB_ECODH</name>
<sequence length="1342" mass="150632">MVYSYTEKKRIRKDFGKRPQVLDVPYLLSIQLDSFQKFIEQDPEGQYGLEAAFRSVFPIQSYSGNSELQYVSYRLGEPVFDVQECQIRGVTYSAPLRVKLRLVIYEREAPEGTVKDIKEQEVYMGEIPLMTDNGTFVINGTERVIVSQLHRSPGVFFDSDKGKTHSSGKVLYNARIIPYRGSWLDFEFDPKDNLFVRIDRRRKLPATIILRALNYTTEQILDLFFEKVIFEIRDNKLQMELVPERLRGETASFDIEANGKVYVEKGRRITARHIRQLEKDDVKLIEVPVEYIAGKVVAKDYIDESTGELICAANMELSLDLLAKLSQSGHKRIETLFTNDLDHGPYISETLRVDPTNDRLSALVEIYRMMRPGEPPTREAAESLFENLFFSEDRYDLSAVGRMKFNRSLLREEIEGSGILSKDDIIDVMKKLIDIRNGKGEVDDIDHLGNRRIRSVGEMAENQFRVGLVRVERAVKERLSLGDLDTLMPQDMINAKPISAAVKEFFGSSQLSQFMDQNNPLSEITHKRRISALGPGGLTRERAGFEVRDVHPTHYGRVCPIETPEGPNIGLINSLSVYAQTNEYGFLETPYRKVTDGVVTDEIHYLSAIEEGNYVIAQANSNLDEEGHFVEDLVTCRSKGESSLFSRDQVDYMDVSTQQVVSVGASLIPFLEHDDANRALMGANMQRQAVPTLRADKPLVGTGMERAVAVDSGVTAVAKRGGVVQYVDASRIVIKVNEDEMYPGEAGIDIYNLTKYTRSNQNTCINQMPCVSLGEPVERGDVLADGPSTDLGELALGQNMRVAFMPWNGYNFEDSILVSERVVQEDRFTTIHIQELACVSRDTKLGPEEITADIPNVGEAALSKLDESGIVYIGAEVTGGDILVGKVTPKGETQLTPEEKLLRAIFGEKASDVKDSSLRVPNGVSGTVIDVQVFTRDGVEKDKRALEIEEMQLKQAKKDLSEELQILEAGLFSRIRAVLVAGGVEAEKLDKLPRDRWLELGLTDEEKQNQLEQLAEQYDELKHEFEKKLEAKRRKITQGDDLAPGVLKIVKVYLAVKRRIQPGDKMAGRHGNKGVISKINPIEDMPYDENGTPVDIVLNPLGVPSRMNIGQILETHLGMAAKGIGDKINAMLKQQQEVAKLREFIQRAYDLGADVRQKVDLSTFSDEEVMRLAENLRKGMPIATPVFDGAKEAEIKELLKLGDLPTSGQIRLYDGRTGEQFERPVTVGYMYMLKLNHLVDDKMHARSTGSYSLVTQQPLGGKAQFGGQRFGEMEVWALEAYGAAYTLQEMLTVKSDDVNGRTKMYKNIVDGNHQMEPGMPESFNVLLKEIRSLGINIELEDE</sequence>
<proteinExistence type="inferred from homology"/>
<reference key="1">
    <citation type="journal article" date="2008" name="J. Bacteriol.">
        <title>The complete genome sequence of Escherichia coli DH10B: insights into the biology of a laboratory workhorse.</title>
        <authorList>
            <person name="Durfee T."/>
            <person name="Nelson R."/>
            <person name="Baldwin S."/>
            <person name="Plunkett G. III"/>
            <person name="Burland V."/>
            <person name="Mau B."/>
            <person name="Petrosino J.F."/>
            <person name="Qin X."/>
            <person name="Muzny D.M."/>
            <person name="Ayele M."/>
            <person name="Gibbs R.A."/>
            <person name="Csorgo B."/>
            <person name="Posfai G."/>
            <person name="Weinstock G.M."/>
            <person name="Blattner F.R."/>
        </authorList>
    </citation>
    <scope>NUCLEOTIDE SEQUENCE [LARGE SCALE GENOMIC DNA]</scope>
    <source>
        <strain>K12 / DH10B</strain>
    </source>
</reference>
<accession>B1XBY9</accession>
<protein>
    <recommendedName>
        <fullName evidence="1">DNA-directed RNA polymerase subunit beta</fullName>
        <shortName evidence="1">RNAP subunit beta</shortName>
        <ecNumber evidence="1">2.7.7.6</ecNumber>
    </recommendedName>
    <alternativeName>
        <fullName evidence="1">RNA polymerase subunit beta</fullName>
    </alternativeName>
    <alternativeName>
        <fullName evidence="1">Transcriptase subunit beta</fullName>
    </alternativeName>
</protein>
<gene>
    <name evidence="1" type="primary">rpoB</name>
    <name type="ordered locus">ECDH10B_4175</name>
</gene>
<evidence type="ECO:0000255" key="1">
    <source>
        <dbReference type="HAMAP-Rule" id="MF_01321"/>
    </source>
</evidence>
<organism>
    <name type="scientific">Escherichia coli (strain K12 / DH10B)</name>
    <dbReference type="NCBI Taxonomy" id="316385"/>
    <lineage>
        <taxon>Bacteria</taxon>
        <taxon>Pseudomonadati</taxon>
        <taxon>Pseudomonadota</taxon>
        <taxon>Gammaproteobacteria</taxon>
        <taxon>Enterobacterales</taxon>
        <taxon>Enterobacteriaceae</taxon>
        <taxon>Escherichia</taxon>
    </lineage>
</organism>
<comment type="function">
    <text evidence="1">DNA-dependent RNA polymerase catalyzes the transcription of DNA into RNA using the four ribonucleoside triphosphates as substrates.</text>
</comment>
<comment type="catalytic activity">
    <reaction evidence="1">
        <text>RNA(n) + a ribonucleoside 5'-triphosphate = RNA(n+1) + diphosphate</text>
        <dbReference type="Rhea" id="RHEA:21248"/>
        <dbReference type="Rhea" id="RHEA-COMP:14527"/>
        <dbReference type="Rhea" id="RHEA-COMP:17342"/>
        <dbReference type="ChEBI" id="CHEBI:33019"/>
        <dbReference type="ChEBI" id="CHEBI:61557"/>
        <dbReference type="ChEBI" id="CHEBI:140395"/>
        <dbReference type="EC" id="2.7.7.6"/>
    </reaction>
</comment>
<comment type="subunit">
    <text evidence="1">The RNAP catalytic core consists of 2 alpha, 1 beta, 1 beta' and 1 omega subunit. When a sigma factor is associated with the core the holoenzyme is formed, which can initiate transcription.</text>
</comment>
<comment type="similarity">
    <text evidence="1">Belongs to the RNA polymerase beta chain family.</text>
</comment>
<keyword id="KW-0007">Acetylation</keyword>
<keyword id="KW-0240">DNA-directed RNA polymerase</keyword>
<keyword id="KW-0548">Nucleotidyltransferase</keyword>
<keyword id="KW-0804">Transcription</keyword>
<keyword id="KW-0808">Transferase</keyword>